<evidence type="ECO:0000255" key="1">
    <source>
        <dbReference type="HAMAP-Rule" id="MF_01690"/>
    </source>
</evidence>
<keyword id="KW-0028">Amino-acid biosynthesis</keyword>
<keyword id="KW-0170">Cobalt</keyword>
<keyword id="KW-0220">Diaminopimelate biosynthesis</keyword>
<keyword id="KW-0378">Hydrolase</keyword>
<keyword id="KW-0457">Lysine biosynthesis</keyword>
<keyword id="KW-0479">Metal-binding</keyword>
<keyword id="KW-1185">Reference proteome</keyword>
<keyword id="KW-0862">Zinc</keyword>
<sequence length="386" mass="40607">MTSPAPVSVSIDPVELAQALIRRPSVTPADAGAMDTLQRQLEALGFACRRMKFGEIENLYARRGTARPNLCFAGHTDVVPVGDDAAWTAGPFEAEIKEGVLYGRGAVDMKSAIAAFVAAVANVPDHPGSISFLITGDEEGVAEDGTVKVVEALAAEGEIIDHCIVGEPTSANLLGDMVKIGRRGSINAWITVEGRQGHVAYPHRAANPVPVLVDILSALKARVLDDGYTGFQPSNLEITTIDVGNTATNVIPAAAKARVNIRFNPAHKGKDLAAWIEGECAKAAEGFDGAATALCKISGEAFLTEPGDFTDVIVAAVTDATGRAPELSTTGGTSDARFIRALCPVVEFGLVGSTMHQVDERVPVEEVRQLAGAYEALIRRYFAAFA</sequence>
<gene>
    <name evidence="1" type="primary">dapE</name>
    <name type="ordered locus">CC_0275</name>
</gene>
<feature type="chain" id="PRO_0000375526" description="Succinyl-diaminopimelate desuccinylase">
    <location>
        <begin position="1"/>
        <end position="386"/>
    </location>
</feature>
<feature type="active site" evidence="1">
    <location>
        <position position="77"/>
    </location>
</feature>
<feature type="active site" description="Proton acceptor" evidence="1">
    <location>
        <position position="138"/>
    </location>
</feature>
<feature type="binding site" evidence="1">
    <location>
        <position position="75"/>
    </location>
    <ligand>
        <name>Zn(2+)</name>
        <dbReference type="ChEBI" id="CHEBI:29105"/>
        <label>1</label>
    </ligand>
</feature>
<feature type="binding site" evidence="1">
    <location>
        <position position="108"/>
    </location>
    <ligand>
        <name>Zn(2+)</name>
        <dbReference type="ChEBI" id="CHEBI:29105"/>
        <label>1</label>
    </ligand>
</feature>
<feature type="binding site" evidence="1">
    <location>
        <position position="108"/>
    </location>
    <ligand>
        <name>Zn(2+)</name>
        <dbReference type="ChEBI" id="CHEBI:29105"/>
        <label>2</label>
    </ligand>
</feature>
<feature type="binding site" evidence="1">
    <location>
        <position position="139"/>
    </location>
    <ligand>
        <name>Zn(2+)</name>
        <dbReference type="ChEBI" id="CHEBI:29105"/>
        <label>2</label>
    </ligand>
</feature>
<feature type="binding site" evidence="1">
    <location>
        <position position="167"/>
    </location>
    <ligand>
        <name>Zn(2+)</name>
        <dbReference type="ChEBI" id="CHEBI:29105"/>
        <label>1</label>
    </ligand>
</feature>
<feature type="binding site" evidence="1">
    <location>
        <position position="356"/>
    </location>
    <ligand>
        <name>Zn(2+)</name>
        <dbReference type="ChEBI" id="CHEBI:29105"/>
        <label>2</label>
    </ligand>
</feature>
<organism>
    <name type="scientific">Caulobacter vibrioides (strain ATCC 19089 / CIP 103742 / CB 15)</name>
    <name type="common">Caulobacter crescentus</name>
    <dbReference type="NCBI Taxonomy" id="190650"/>
    <lineage>
        <taxon>Bacteria</taxon>
        <taxon>Pseudomonadati</taxon>
        <taxon>Pseudomonadota</taxon>
        <taxon>Alphaproteobacteria</taxon>
        <taxon>Caulobacterales</taxon>
        <taxon>Caulobacteraceae</taxon>
        <taxon>Caulobacter</taxon>
    </lineage>
</organism>
<reference key="1">
    <citation type="journal article" date="2001" name="Proc. Natl. Acad. Sci. U.S.A.">
        <title>Complete genome sequence of Caulobacter crescentus.</title>
        <authorList>
            <person name="Nierman W.C."/>
            <person name="Feldblyum T.V."/>
            <person name="Laub M.T."/>
            <person name="Paulsen I.T."/>
            <person name="Nelson K.E."/>
            <person name="Eisen J.A."/>
            <person name="Heidelberg J.F."/>
            <person name="Alley M.R.K."/>
            <person name="Ohta N."/>
            <person name="Maddock J.R."/>
            <person name="Potocka I."/>
            <person name="Nelson W.C."/>
            <person name="Newton A."/>
            <person name="Stephens C."/>
            <person name="Phadke N.D."/>
            <person name="Ely B."/>
            <person name="DeBoy R.T."/>
            <person name="Dodson R.J."/>
            <person name="Durkin A.S."/>
            <person name="Gwinn M.L."/>
            <person name="Haft D.H."/>
            <person name="Kolonay J.F."/>
            <person name="Smit J."/>
            <person name="Craven M.B."/>
            <person name="Khouri H.M."/>
            <person name="Shetty J."/>
            <person name="Berry K.J."/>
            <person name="Utterback T.R."/>
            <person name="Tran K."/>
            <person name="Wolf A.M."/>
            <person name="Vamathevan J.J."/>
            <person name="Ermolaeva M.D."/>
            <person name="White O."/>
            <person name="Salzberg S.L."/>
            <person name="Venter J.C."/>
            <person name="Shapiro L."/>
            <person name="Fraser C.M."/>
        </authorList>
    </citation>
    <scope>NUCLEOTIDE SEQUENCE [LARGE SCALE GENOMIC DNA]</scope>
    <source>
        <strain>ATCC 19089 / CIP 103742 / CB 15</strain>
    </source>
</reference>
<proteinExistence type="inferred from homology"/>
<protein>
    <recommendedName>
        <fullName evidence="1">Succinyl-diaminopimelate desuccinylase</fullName>
        <shortName evidence="1">SDAP desuccinylase</shortName>
        <ecNumber evidence="1">3.5.1.18</ecNumber>
    </recommendedName>
    <alternativeName>
        <fullName evidence="1">N-succinyl-LL-2,6-diaminoheptanedioate amidohydrolase</fullName>
    </alternativeName>
</protein>
<accession>Q9ABF3</accession>
<name>DAPE_CAUVC</name>
<comment type="function">
    <text evidence="1">Catalyzes the hydrolysis of N-succinyl-L,L-diaminopimelic acid (SDAP), forming succinate and LL-2,6-diaminopimelate (DAP), an intermediate involved in the bacterial biosynthesis of lysine and meso-diaminopimelic acid, an essential component of bacterial cell walls.</text>
</comment>
<comment type="catalytic activity">
    <reaction evidence="1">
        <text>N-succinyl-(2S,6S)-2,6-diaminopimelate + H2O = (2S,6S)-2,6-diaminopimelate + succinate</text>
        <dbReference type="Rhea" id="RHEA:22608"/>
        <dbReference type="ChEBI" id="CHEBI:15377"/>
        <dbReference type="ChEBI" id="CHEBI:30031"/>
        <dbReference type="ChEBI" id="CHEBI:57609"/>
        <dbReference type="ChEBI" id="CHEBI:58087"/>
        <dbReference type="EC" id="3.5.1.18"/>
    </reaction>
</comment>
<comment type="cofactor">
    <cofactor evidence="1">
        <name>Zn(2+)</name>
        <dbReference type="ChEBI" id="CHEBI:29105"/>
    </cofactor>
    <cofactor evidence="1">
        <name>Co(2+)</name>
        <dbReference type="ChEBI" id="CHEBI:48828"/>
    </cofactor>
    <text evidence="1">Binds 2 Zn(2+) or Co(2+) ions per subunit.</text>
</comment>
<comment type="pathway">
    <text evidence="1">Amino-acid biosynthesis; L-lysine biosynthesis via DAP pathway; LL-2,6-diaminopimelate from (S)-tetrahydrodipicolinate (succinylase route): step 3/3.</text>
</comment>
<comment type="subunit">
    <text evidence="1">Homodimer.</text>
</comment>
<comment type="similarity">
    <text evidence="1">Belongs to the peptidase M20A family. DapE subfamily.</text>
</comment>
<dbReference type="EC" id="3.5.1.18" evidence="1"/>
<dbReference type="EMBL" id="AE005673">
    <property type="protein sequence ID" value="AAK22262.1"/>
    <property type="molecule type" value="Genomic_DNA"/>
</dbReference>
<dbReference type="PIR" id="B87283">
    <property type="entry name" value="B87283"/>
</dbReference>
<dbReference type="RefSeq" id="NP_419094.1">
    <property type="nucleotide sequence ID" value="NC_002696.2"/>
</dbReference>
<dbReference type="RefSeq" id="WP_010918164.1">
    <property type="nucleotide sequence ID" value="NC_002696.2"/>
</dbReference>
<dbReference type="SMR" id="Q9ABF3"/>
<dbReference type="STRING" id="190650.CC_0275"/>
<dbReference type="MEROPS" id="M20.010"/>
<dbReference type="EnsemblBacteria" id="AAK22262">
    <property type="protein sequence ID" value="AAK22262"/>
    <property type="gene ID" value="CC_0275"/>
</dbReference>
<dbReference type="KEGG" id="ccr:CC_0275"/>
<dbReference type="PATRIC" id="fig|190650.5.peg.273"/>
<dbReference type="eggNOG" id="COG0624">
    <property type="taxonomic scope" value="Bacteria"/>
</dbReference>
<dbReference type="HOGENOM" id="CLU_021802_4_0_5"/>
<dbReference type="BioCyc" id="CAULO:CC0275-MONOMER"/>
<dbReference type="UniPathway" id="UPA00034">
    <property type="reaction ID" value="UER00021"/>
</dbReference>
<dbReference type="Proteomes" id="UP000001816">
    <property type="component" value="Chromosome"/>
</dbReference>
<dbReference type="GO" id="GO:0008777">
    <property type="term" value="F:acetylornithine deacetylase activity"/>
    <property type="evidence" value="ECO:0007669"/>
    <property type="project" value="TreeGrafter"/>
</dbReference>
<dbReference type="GO" id="GO:0050897">
    <property type="term" value="F:cobalt ion binding"/>
    <property type="evidence" value="ECO:0007669"/>
    <property type="project" value="UniProtKB-UniRule"/>
</dbReference>
<dbReference type="GO" id="GO:0009014">
    <property type="term" value="F:succinyl-diaminopimelate desuccinylase activity"/>
    <property type="evidence" value="ECO:0007669"/>
    <property type="project" value="UniProtKB-UniRule"/>
</dbReference>
<dbReference type="GO" id="GO:0008270">
    <property type="term" value="F:zinc ion binding"/>
    <property type="evidence" value="ECO:0007669"/>
    <property type="project" value="UniProtKB-UniRule"/>
</dbReference>
<dbReference type="GO" id="GO:0019877">
    <property type="term" value="P:diaminopimelate biosynthetic process"/>
    <property type="evidence" value="ECO:0007669"/>
    <property type="project" value="UniProtKB-UniRule"/>
</dbReference>
<dbReference type="GO" id="GO:0006526">
    <property type="term" value="P:L-arginine biosynthetic process"/>
    <property type="evidence" value="ECO:0007669"/>
    <property type="project" value="TreeGrafter"/>
</dbReference>
<dbReference type="GO" id="GO:0009089">
    <property type="term" value="P:lysine biosynthetic process via diaminopimelate"/>
    <property type="evidence" value="ECO:0007669"/>
    <property type="project" value="UniProtKB-UniRule"/>
</dbReference>
<dbReference type="CDD" id="cd03891">
    <property type="entry name" value="M20_DapE_proteobac"/>
    <property type="match status" value="1"/>
</dbReference>
<dbReference type="Gene3D" id="3.40.630.10">
    <property type="entry name" value="Zn peptidases"/>
    <property type="match status" value="2"/>
</dbReference>
<dbReference type="HAMAP" id="MF_01690">
    <property type="entry name" value="DapE"/>
    <property type="match status" value="1"/>
</dbReference>
<dbReference type="InterPro" id="IPR036264">
    <property type="entry name" value="Bact_exopeptidase_dim_dom"/>
</dbReference>
<dbReference type="InterPro" id="IPR005941">
    <property type="entry name" value="DapE_proteobac"/>
</dbReference>
<dbReference type="InterPro" id="IPR002933">
    <property type="entry name" value="Peptidase_M20"/>
</dbReference>
<dbReference type="InterPro" id="IPR011650">
    <property type="entry name" value="Peptidase_M20_dimer"/>
</dbReference>
<dbReference type="InterPro" id="IPR050072">
    <property type="entry name" value="Peptidase_M20A"/>
</dbReference>
<dbReference type="NCBIfam" id="TIGR01246">
    <property type="entry name" value="dapE_proteo"/>
    <property type="match status" value="1"/>
</dbReference>
<dbReference type="NCBIfam" id="NF009557">
    <property type="entry name" value="PRK13009.1"/>
    <property type="match status" value="1"/>
</dbReference>
<dbReference type="PANTHER" id="PTHR43808">
    <property type="entry name" value="ACETYLORNITHINE DEACETYLASE"/>
    <property type="match status" value="1"/>
</dbReference>
<dbReference type="PANTHER" id="PTHR43808:SF31">
    <property type="entry name" value="N-ACETYL-L-CITRULLINE DEACETYLASE"/>
    <property type="match status" value="1"/>
</dbReference>
<dbReference type="Pfam" id="PF07687">
    <property type="entry name" value="M20_dimer"/>
    <property type="match status" value="1"/>
</dbReference>
<dbReference type="Pfam" id="PF01546">
    <property type="entry name" value="Peptidase_M20"/>
    <property type="match status" value="1"/>
</dbReference>
<dbReference type="SUPFAM" id="SSF55031">
    <property type="entry name" value="Bacterial exopeptidase dimerisation domain"/>
    <property type="match status" value="1"/>
</dbReference>
<dbReference type="SUPFAM" id="SSF53187">
    <property type="entry name" value="Zn-dependent exopeptidases"/>
    <property type="match status" value="1"/>
</dbReference>
<dbReference type="PROSITE" id="PS00759">
    <property type="entry name" value="ARGE_DAPE_CPG2_2"/>
    <property type="match status" value="1"/>
</dbReference>